<organism>
    <name type="scientific">Escherichia coli O139:H28 (strain E24377A / ETEC)</name>
    <dbReference type="NCBI Taxonomy" id="331111"/>
    <lineage>
        <taxon>Bacteria</taxon>
        <taxon>Pseudomonadati</taxon>
        <taxon>Pseudomonadota</taxon>
        <taxon>Gammaproteobacteria</taxon>
        <taxon>Enterobacterales</taxon>
        <taxon>Enterobacteriaceae</taxon>
        <taxon>Escherichia</taxon>
    </lineage>
</organism>
<gene>
    <name evidence="1" type="primary">aroE</name>
    <name type="ordered locus">EcE24377A_3764</name>
</gene>
<dbReference type="EC" id="1.1.1.25" evidence="1"/>
<dbReference type="EMBL" id="CP000800">
    <property type="protein sequence ID" value="ABV19248.1"/>
    <property type="molecule type" value="Genomic_DNA"/>
</dbReference>
<dbReference type="RefSeq" id="WP_000451211.1">
    <property type="nucleotide sequence ID" value="NC_009801.1"/>
</dbReference>
<dbReference type="SMR" id="A7ZSH0"/>
<dbReference type="GeneID" id="75204136"/>
<dbReference type="KEGG" id="ecw:EcE24377A_3764"/>
<dbReference type="HOGENOM" id="CLU_044063_2_1_6"/>
<dbReference type="UniPathway" id="UPA00053">
    <property type="reaction ID" value="UER00087"/>
</dbReference>
<dbReference type="Proteomes" id="UP000001122">
    <property type="component" value="Chromosome"/>
</dbReference>
<dbReference type="GO" id="GO:0005829">
    <property type="term" value="C:cytosol"/>
    <property type="evidence" value="ECO:0007669"/>
    <property type="project" value="TreeGrafter"/>
</dbReference>
<dbReference type="GO" id="GO:0050661">
    <property type="term" value="F:NADP binding"/>
    <property type="evidence" value="ECO:0007669"/>
    <property type="project" value="InterPro"/>
</dbReference>
<dbReference type="GO" id="GO:0004764">
    <property type="term" value="F:shikimate 3-dehydrogenase (NADP+) activity"/>
    <property type="evidence" value="ECO:0007669"/>
    <property type="project" value="UniProtKB-UniRule"/>
</dbReference>
<dbReference type="GO" id="GO:0008652">
    <property type="term" value="P:amino acid biosynthetic process"/>
    <property type="evidence" value="ECO:0007669"/>
    <property type="project" value="UniProtKB-KW"/>
</dbReference>
<dbReference type="GO" id="GO:0009073">
    <property type="term" value="P:aromatic amino acid family biosynthetic process"/>
    <property type="evidence" value="ECO:0007669"/>
    <property type="project" value="UniProtKB-KW"/>
</dbReference>
<dbReference type="GO" id="GO:0009423">
    <property type="term" value="P:chorismate biosynthetic process"/>
    <property type="evidence" value="ECO:0007669"/>
    <property type="project" value="UniProtKB-UniRule"/>
</dbReference>
<dbReference type="GO" id="GO:0019632">
    <property type="term" value="P:shikimate metabolic process"/>
    <property type="evidence" value="ECO:0007669"/>
    <property type="project" value="InterPro"/>
</dbReference>
<dbReference type="CDD" id="cd01065">
    <property type="entry name" value="NAD_bind_Shikimate_DH"/>
    <property type="match status" value="1"/>
</dbReference>
<dbReference type="FunFam" id="3.40.50.10860:FF:000006">
    <property type="entry name" value="Shikimate dehydrogenase (NADP(+))"/>
    <property type="match status" value="1"/>
</dbReference>
<dbReference type="FunFam" id="3.40.50.720:FF:000104">
    <property type="entry name" value="Shikimate dehydrogenase (NADP(+))"/>
    <property type="match status" value="1"/>
</dbReference>
<dbReference type="Gene3D" id="3.40.50.10860">
    <property type="entry name" value="Leucine Dehydrogenase, chain A, domain 1"/>
    <property type="match status" value="1"/>
</dbReference>
<dbReference type="Gene3D" id="3.40.50.720">
    <property type="entry name" value="NAD(P)-binding Rossmann-like Domain"/>
    <property type="match status" value="1"/>
</dbReference>
<dbReference type="HAMAP" id="MF_00222">
    <property type="entry name" value="Shikimate_DH_AroE"/>
    <property type="match status" value="1"/>
</dbReference>
<dbReference type="InterPro" id="IPR046346">
    <property type="entry name" value="Aminoacid_DH-like_N_sf"/>
</dbReference>
<dbReference type="InterPro" id="IPR036291">
    <property type="entry name" value="NAD(P)-bd_dom_sf"/>
</dbReference>
<dbReference type="InterPro" id="IPR041121">
    <property type="entry name" value="SDH_C"/>
</dbReference>
<dbReference type="InterPro" id="IPR011342">
    <property type="entry name" value="Shikimate_DH"/>
</dbReference>
<dbReference type="InterPro" id="IPR013708">
    <property type="entry name" value="Shikimate_DH-bd_N"/>
</dbReference>
<dbReference type="InterPro" id="IPR022893">
    <property type="entry name" value="Shikimate_DH_fam"/>
</dbReference>
<dbReference type="InterPro" id="IPR006151">
    <property type="entry name" value="Shikm_DH/Glu-tRNA_Rdtase"/>
</dbReference>
<dbReference type="NCBIfam" id="TIGR00507">
    <property type="entry name" value="aroE"/>
    <property type="match status" value="1"/>
</dbReference>
<dbReference type="NCBIfam" id="NF001310">
    <property type="entry name" value="PRK00258.1-2"/>
    <property type="match status" value="1"/>
</dbReference>
<dbReference type="PANTHER" id="PTHR21089:SF1">
    <property type="entry name" value="BIFUNCTIONAL 3-DEHYDROQUINATE DEHYDRATASE_SHIKIMATE DEHYDROGENASE, CHLOROPLASTIC"/>
    <property type="match status" value="1"/>
</dbReference>
<dbReference type="PANTHER" id="PTHR21089">
    <property type="entry name" value="SHIKIMATE DEHYDROGENASE"/>
    <property type="match status" value="1"/>
</dbReference>
<dbReference type="Pfam" id="PF18317">
    <property type="entry name" value="SDH_C"/>
    <property type="match status" value="1"/>
</dbReference>
<dbReference type="Pfam" id="PF01488">
    <property type="entry name" value="Shikimate_DH"/>
    <property type="match status" value="1"/>
</dbReference>
<dbReference type="Pfam" id="PF08501">
    <property type="entry name" value="Shikimate_dh_N"/>
    <property type="match status" value="1"/>
</dbReference>
<dbReference type="SUPFAM" id="SSF53223">
    <property type="entry name" value="Aminoacid dehydrogenase-like, N-terminal domain"/>
    <property type="match status" value="1"/>
</dbReference>
<dbReference type="SUPFAM" id="SSF51735">
    <property type="entry name" value="NAD(P)-binding Rossmann-fold domains"/>
    <property type="match status" value="1"/>
</dbReference>
<proteinExistence type="inferred from homology"/>
<keyword id="KW-0028">Amino-acid biosynthesis</keyword>
<keyword id="KW-0057">Aromatic amino acid biosynthesis</keyword>
<keyword id="KW-0521">NADP</keyword>
<keyword id="KW-0560">Oxidoreductase</keyword>
<keyword id="KW-1185">Reference proteome</keyword>
<feature type="chain" id="PRO_1000058662" description="Shikimate dehydrogenase (NADP(+))">
    <location>
        <begin position="1"/>
        <end position="272"/>
    </location>
</feature>
<feature type="active site" description="Proton acceptor" evidence="1">
    <location>
        <position position="65"/>
    </location>
</feature>
<feature type="binding site" evidence="1">
    <location>
        <begin position="14"/>
        <end position="16"/>
    </location>
    <ligand>
        <name>shikimate</name>
        <dbReference type="ChEBI" id="CHEBI:36208"/>
    </ligand>
</feature>
<feature type="binding site" evidence="1">
    <location>
        <position position="61"/>
    </location>
    <ligand>
        <name>shikimate</name>
        <dbReference type="ChEBI" id="CHEBI:36208"/>
    </ligand>
</feature>
<feature type="binding site" evidence="1">
    <location>
        <position position="77"/>
    </location>
    <ligand>
        <name>NADP(+)</name>
        <dbReference type="ChEBI" id="CHEBI:58349"/>
    </ligand>
</feature>
<feature type="binding site" evidence="1">
    <location>
        <position position="86"/>
    </location>
    <ligand>
        <name>shikimate</name>
        <dbReference type="ChEBI" id="CHEBI:36208"/>
    </ligand>
</feature>
<feature type="binding site" evidence="1">
    <location>
        <position position="102"/>
    </location>
    <ligand>
        <name>shikimate</name>
        <dbReference type="ChEBI" id="CHEBI:36208"/>
    </ligand>
</feature>
<feature type="binding site" evidence="1">
    <location>
        <begin position="126"/>
        <end position="130"/>
    </location>
    <ligand>
        <name>NADP(+)</name>
        <dbReference type="ChEBI" id="CHEBI:58349"/>
    </ligand>
</feature>
<feature type="binding site" evidence="1">
    <location>
        <begin position="149"/>
        <end position="154"/>
    </location>
    <ligand>
        <name>NADP(+)</name>
        <dbReference type="ChEBI" id="CHEBI:58349"/>
    </ligand>
</feature>
<feature type="binding site" evidence="1">
    <location>
        <position position="213"/>
    </location>
    <ligand>
        <name>NADP(+)</name>
        <dbReference type="ChEBI" id="CHEBI:58349"/>
    </ligand>
</feature>
<feature type="binding site" evidence="1">
    <location>
        <position position="215"/>
    </location>
    <ligand>
        <name>shikimate</name>
        <dbReference type="ChEBI" id="CHEBI:36208"/>
    </ligand>
</feature>
<feature type="binding site" evidence="1">
    <location>
        <position position="237"/>
    </location>
    <ligand>
        <name>NADP(+)</name>
        <dbReference type="ChEBI" id="CHEBI:58349"/>
    </ligand>
</feature>
<accession>A7ZSH0</accession>
<sequence>METYAVFGNPIAHSKSPFIHQQFAQQLNIEHPYGRVLAPINDFINTLNAFFRAGGKGANVTVPFKEEAFARADELTERAALAGAVNTLKRLEDGRLLGDNTDGIGLLSDLERLSFIRPGLRILLIGAGGASRGVLLPLLSLDCAVTITNRTVSRAEELAKLFAHTGSIQALGMDELEGHEFDLIINATSSGISGDIPAIPSSLIHPGIYCYDMFYQKGKTPFLAWCEQRGSKRNADGLGMLVAQAAHAFLLWHGVLPDVEPVIKQLQEELSA</sequence>
<protein>
    <recommendedName>
        <fullName evidence="1">Shikimate dehydrogenase (NADP(+))</fullName>
        <shortName evidence="1">SDH</shortName>
        <ecNumber evidence="1">1.1.1.25</ecNumber>
    </recommendedName>
</protein>
<comment type="function">
    <text evidence="1">Involved in the biosynthesis of the chorismate, which leads to the biosynthesis of aromatic amino acids. Catalyzes the reversible NADPH linked reduction of 3-dehydroshikimate (DHSA) to yield shikimate (SA).</text>
</comment>
<comment type="catalytic activity">
    <reaction evidence="1">
        <text>shikimate + NADP(+) = 3-dehydroshikimate + NADPH + H(+)</text>
        <dbReference type="Rhea" id="RHEA:17737"/>
        <dbReference type="ChEBI" id="CHEBI:15378"/>
        <dbReference type="ChEBI" id="CHEBI:16630"/>
        <dbReference type="ChEBI" id="CHEBI:36208"/>
        <dbReference type="ChEBI" id="CHEBI:57783"/>
        <dbReference type="ChEBI" id="CHEBI:58349"/>
        <dbReference type="EC" id="1.1.1.25"/>
    </reaction>
</comment>
<comment type="pathway">
    <text evidence="1">Metabolic intermediate biosynthesis; chorismate biosynthesis; chorismate from D-erythrose 4-phosphate and phosphoenolpyruvate: step 4/7.</text>
</comment>
<comment type="subunit">
    <text evidence="1">Homodimer.</text>
</comment>
<comment type="similarity">
    <text evidence="1">Belongs to the shikimate dehydrogenase family.</text>
</comment>
<reference key="1">
    <citation type="journal article" date="2008" name="J. Bacteriol.">
        <title>The pangenome structure of Escherichia coli: comparative genomic analysis of E. coli commensal and pathogenic isolates.</title>
        <authorList>
            <person name="Rasko D.A."/>
            <person name="Rosovitz M.J."/>
            <person name="Myers G.S.A."/>
            <person name="Mongodin E.F."/>
            <person name="Fricke W.F."/>
            <person name="Gajer P."/>
            <person name="Crabtree J."/>
            <person name="Sebaihia M."/>
            <person name="Thomson N.R."/>
            <person name="Chaudhuri R."/>
            <person name="Henderson I.R."/>
            <person name="Sperandio V."/>
            <person name="Ravel J."/>
        </authorList>
    </citation>
    <scope>NUCLEOTIDE SEQUENCE [LARGE SCALE GENOMIC DNA]</scope>
    <source>
        <strain>E24377A / ETEC</strain>
    </source>
</reference>
<name>AROE_ECO24</name>
<evidence type="ECO:0000255" key="1">
    <source>
        <dbReference type="HAMAP-Rule" id="MF_00222"/>
    </source>
</evidence>